<gene>
    <name type="primary">yffQ</name>
    <name type="ordered locus">b2448</name>
</gene>
<dbReference type="EMBL" id="U00096">
    <property type="protein sequence ID" value="AAC75501.2"/>
    <property type="molecule type" value="Genomic_DNA"/>
</dbReference>
<dbReference type="PIR" id="G65019">
    <property type="entry name" value="G65019"/>
</dbReference>
<dbReference type="RefSeq" id="NP_416943.2">
    <property type="nucleotide sequence ID" value="NC_000913.3"/>
</dbReference>
<dbReference type="RefSeq" id="WP_000770705.1">
    <property type="nucleotide sequence ID" value="NZ_JACEFS010000004.1"/>
</dbReference>
<dbReference type="FunCoup" id="P76548">
    <property type="interactions" value="265"/>
</dbReference>
<dbReference type="STRING" id="511145.b2448"/>
<dbReference type="PaxDb" id="511145-b2448"/>
<dbReference type="EnsemblBacteria" id="AAC75501">
    <property type="protein sequence ID" value="AAC75501"/>
    <property type="gene ID" value="b2448"/>
</dbReference>
<dbReference type="GeneID" id="946927"/>
<dbReference type="KEGG" id="eco:b2448"/>
<dbReference type="KEGG" id="ecoc:C3026_13590"/>
<dbReference type="PATRIC" id="fig|511145.12.peg.2541"/>
<dbReference type="EchoBASE" id="EB3930"/>
<dbReference type="InParanoid" id="P76548"/>
<dbReference type="BioCyc" id="EcoCyc:G7278-MONOMER"/>
<dbReference type="PRO" id="PR:P76548"/>
<dbReference type="Proteomes" id="UP000000625">
    <property type="component" value="Chromosome"/>
</dbReference>
<keyword id="KW-1185">Reference proteome</keyword>
<sequence>MKLLIAIILMVLTGVCFADVGDYRLNGEDNARIESVVTDNCEKTAVLVGGDRLARVEIEYIATLCKPVALVIIYDRFDDIAAIPLKVTLKKVLKENSDEKINLLNKMGDLAGRIVAEQYLGMSFE</sequence>
<feature type="chain" id="PRO_0000169237" description="Uncharacterized protein YffQ">
    <location>
        <begin position="1"/>
        <end position="125"/>
    </location>
</feature>
<name>YFFQ_ECOLI</name>
<accession>P76548</accession>
<proteinExistence type="predicted"/>
<organism>
    <name type="scientific">Escherichia coli (strain K12)</name>
    <dbReference type="NCBI Taxonomy" id="83333"/>
    <lineage>
        <taxon>Bacteria</taxon>
        <taxon>Pseudomonadati</taxon>
        <taxon>Pseudomonadota</taxon>
        <taxon>Gammaproteobacteria</taxon>
        <taxon>Enterobacterales</taxon>
        <taxon>Enterobacteriaceae</taxon>
        <taxon>Escherichia</taxon>
    </lineage>
</organism>
<protein>
    <recommendedName>
        <fullName>Uncharacterized protein YffQ</fullName>
    </recommendedName>
</protein>
<reference key="1">
    <citation type="journal article" date="1997" name="Science">
        <title>The complete genome sequence of Escherichia coli K-12.</title>
        <authorList>
            <person name="Blattner F.R."/>
            <person name="Plunkett G. III"/>
            <person name="Bloch C.A."/>
            <person name="Perna N.T."/>
            <person name="Burland V."/>
            <person name="Riley M."/>
            <person name="Collado-Vides J."/>
            <person name="Glasner J.D."/>
            <person name="Rode C.K."/>
            <person name="Mayhew G.F."/>
            <person name="Gregor J."/>
            <person name="Davis N.W."/>
            <person name="Kirkpatrick H.A."/>
            <person name="Goeden M.A."/>
            <person name="Rose D.J."/>
            <person name="Mau B."/>
            <person name="Shao Y."/>
        </authorList>
    </citation>
    <scope>NUCLEOTIDE SEQUENCE [LARGE SCALE GENOMIC DNA]</scope>
    <source>
        <strain>K12 / MG1655 / ATCC 47076</strain>
    </source>
</reference>